<name>I17RD_HUMAN</name>
<reference key="1">
    <citation type="journal article" date="2003" name="J. Biol. Chem.">
        <title>hSef inhibits PC-12 cell differentiation by interfering with Ras-mitogen-activated protein kinase MAPK signaling.</title>
        <authorList>
            <person name="Xiong S.Q."/>
            <person name="Zhao Q.H."/>
            <person name="Rong Z."/>
            <person name="Huang G.R."/>
            <person name="Huang Y."/>
            <person name="Chen P.L."/>
            <person name="Zhang S."/>
            <person name="Liu L."/>
            <person name="Chang Z.J."/>
        </authorList>
    </citation>
    <scope>NUCLEOTIDE SEQUENCE [MRNA] (ISOFORMS 1 AND 2)</scope>
    <scope>VARIANT MET-255</scope>
    <scope>FUNCTION</scope>
    <scope>INTERACTION WITH FGFR1 AND FGFR2</scope>
</reference>
<reference key="2">
    <citation type="journal article" date="2004" name="Proc. Natl. Acad. Sci. U.S.A.">
        <title>Alternative splicing generates an isoform of the human Sef gene with altered subcellular localization and specificity.</title>
        <authorList>
            <person name="Preger E."/>
            <person name="Ziv I."/>
            <person name="Shabtay A."/>
            <person name="Sher I."/>
            <person name="Tsang M."/>
            <person name="Dawid I.B."/>
            <person name="Altuvia Y."/>
            <person name="Ron D."/>
        </authorList>
    </citation>
    <scope>NUCLEOTIDE SEQUENCE [MRNA] (ISOFORM 4)</scope>
    <scope>VARIANT MET-255</scope>
    <scope>SUBCELLULAR LOCATION</scope>
    <source>
        <tissue>Testis</tissue>
    </source>
</reference>
<reference key="3">
    <citation type="submission" date="2001-12" db="EMBL/GenBank/DDBJ databases">
        <title>Identification of novel IL-17 related receptors.</title>
        <authorList>
            <person name="Gilbert J.M."/>
            <person name="Gorman D.M."/>
        </authorList>
    </citation>
    <scope>NUCLEOTIDE SEQUENCE [MRNA] (ISOFORM 1)</scope>
    <scope>VARIANT MET-255</scope>
</reference>
<reference key="4">
    <citation type="journal article" date="2003" name="Genome Res.">
        <title>The secreted protein discovery initiative (SPDI), a large-scale effort to identify novel human secreted and transmembrane proteins: a bioinformatics assessment.</title>
        <authorList>
            <person name="Clark H.F."/>
            <person name="Gurney A.L."/>
            <person name="Abaya E."/>
            <person name="Baker K."/>
            <person name="Baldwin D.T."/>
            <person name="Brush J."/>
            <person name="Chen J."/>
            <person name="Chow B."/>
            <person name="Chui C."/>
            <person name="Crowley C."/>
            <person name="Currell B."/>
            <person name="Deuel B."/>
            <person name="Dowd P."/>
            <person name="Eaton D."/>
            <person name="Foster J.S."/>
            <person name="Grimaldi C."/>
            <person name="Gu Q."/>
            <person name="Hass P.E."/>
            <person name="Heldens S."/>
            <person name="Huang A."/>
            <person name="Kim H.S."/>
            <person name="Klimowski L."/>
            <person name="Jin Y."/>
            <person name="Johnson S."/>
            <person name="Lee J."/>
            <person name="Lewis L."/>
            <person name="Liao D."/>
            <person name="Mark M.R."/>
            <person name="Robbie E."/>
            <person name="Sanchez C."/>
            <person name="Schoenfeld J."/>
            <person name="Seshagiri S."/>
            <person name="Simmons L."/>
            <person name="Singh J."/>
            <person name="Smith V."/>
            <person name="Stinson J."/>
            <person name="Vagts A."/>
            <person name="Vandlen R.L."/>
            <person name="Watanabe C."/>
            <person name="Wieand D."/>
            <person name="Woods K."/>
            <person name="Xie M.-H."/>
            <person name="Yansura D.G."/>
            <person name="Yi S."/>
            <person name="Yu G."/>
            <person name="Yuan J."/>
            <person name="Zhang M."/>
            <person name="Zhang Z."/>
            <person name="Goddard A.D."/>
            <person name="Wood W.I."/>
            <person name="Godowski P.J."/>
            <person name="Gray A.M."/>
        </authorList>
    </citation>
    <scope>NUCLEOTIDE SEQUENCE [LARGE SCALE MRNA] (ISOFORM 3)</scope>
    <scope>VARIANT MET-255</scope>
</reference>
<reference key="5">
    <citation type="journal article" date="2007" name="BMC Genomics">
        <title>The full-ORF clone resource of the German cDNA consortium.</title>
        <authorList>
            <person name="Bechtel S."/>
            <person name="Rosenfelder H."/>
            <person name="Duda A."/>
            <person name="Schmidt C.P."/>
            <person name="Ernst U."/>
            <person name="Wellenreuther R."/>
            <person name="Mehrle A."/>
            <person name="Schuster C."/>
            <person name="Bahr A."/>
            <person name="Bloecker H."/>
            <person name="Heubner D."/>
            <person name="Hoerlein A."/>
            <person name="Michel G."/>
            <person name="Wedler H."/>
            <person name="Koehrer K."/>
            <person name="Ottenwaelder B."/>
            <person name="Poustka A."/>
            <person name="Wiemann S."/>
            <person name="Schupp I."/>
        </authorList>
    </citation>
    <scope>NUCLEOTIDE SEQUENCE [LARGE SCALE MRNA] (ISOFORM 2)</scope>
    <scope>VARIANT MET-255</scope>
    <source>
        <tissue>Testis</tissue>
    </source>
</reference>
<reference key="6">
    <citation type="journal article" date="2004" name="Genome Res.">
        <title>The status, quality, and expansion of the NIH full-length cDNA project: the Mammalian Gene Collection (MGC).</title>
        <authorList>
            <consortium name="The MGC Project Team"/>
        </authorList>
    </citation>
    <scope>NUCLEOTIDE SEQUENCE [LARGE SCALE MRNA] (ISOFORM 4)</scope>
    <scope>VARIANT MET-255</scope>
</reference>
<reference key="7">
    <citation type="journal article" date="2003" name="J. Biol. Chem.">
        <title>A novel interleukin-17 receptor-like protein identified in human umbilical vein endothelial cells antagonizes basic fibroblast growth factor-induced signaling.</title>
        <authorList>
            <person name="Yang R.-B."/>
            <person name="Domingos Ng C.K."/>
            <person name="Wasserman S.M."/>
            <person name="Koemueves L.G."/>
            <person name="Gerritsen M.E."/>
            <person name="Topper J.N."/>
        </authorList>
    </citation>
    <scope>FUNCTION</scope>
    <scope>TISSUE SPECIFICITY</scope>
    <scope>HOMOOLIGOMERIZATION</scope>
    <scope>INTERACTION WITH FGFR1</scope>
</reference>
<reference key="8">
    <citation type="journal article" date="2004" name="Dev. Cell">
        <title>Sef is a spatial regulator for Ras/MAP kinase signaling.</title>
        <authorList>
            <person name="Torii S."/>
            <person name="Kusakabe M."/>
            <person name="Yamamoto T."/>
            <person name="Maekawa M."/>
            <person name="Nishida E."/>
        </authorList>
    </citation>
    <scope>FUNCTION</scope>
    <scope>INTERACTION WITH MAP2K1/2</scope>
    <scope>IDENTIFICATION IN A COMPLEX WITH MAP2K1/2 AND MAPK1/3</scope>
</reference>
<reference key="9">
    <citation type="journal article" date="2013" name="Am. J. Hum. Genet.">
        <title>Mutations in FGF17, IL17RD, DUSP6, SPRY4, and FLRT3 are identified in individuals with congenital hypogonadotropic hypogonadism.</title>
        <authorList>
            <person name="Miraoui H."/>
            <person name="Dwyer A.A."/>
            <person name="Sykiotis G.P."/>
            <person name="Plummer L."/>
            <person name="Chung W."/>
            <person name="Feng B."/>
            <person name="Beenken A."/>
            <person name="Clarke J."/>
            <person name="Pers T.H."/>
            <person name="Dworzynski P."/>
            <person name="Keefe K."/>
            <person name="Niedziela M."/>
            <person name="Raivio T."/>
            <person name="Crowley W.F. Jr."/>
            <person name="Seminara S.B."/>
            <person name="Quinton R."/>
            <person name="Hughes V.A."/>
            <person name="Kumanov P."/>
            <person name="Young J."/>
            <person name="Yialamas M.A."/>
            <person name="Hall J.E."/>
            <person name="Van Vliet G."/>
            <person name="Chanoine J.P."/>
            <person name="Rubenstein J."/>
            <person name="Mohammadi M."/>
            <person name="Tsai P.S."/>
            <person name="Sidis Y."/>
            <person name="Lage K."/>
            <person name="Pitteloud N."/>
        </authorList>
    </citation>
    <scope>VARIANTS HH18 THR-131; ARG-162; SER-306; CYS-379; LEU-468; GLN-577 AND VAL-735</scope>
    <scope>CHARACTERIZATION OF VARIANTS HH18 THR-131; ARG-162; SER-306; CYS-379; LEU-468; GLN-577 AND VAL-735</scope>
</reference>
<sequence length="739" mass="82411">MAPWLQLCSVFFTVNACLNGSQLAVAAGGSGRARGADTCGWRGVGPASRNSGLYNITFKYDNCTTYLNPVGKHVIADAQNITISQYACHDQVAVTILWSPGALGIEFLKGFRVILEELKSEGRQCQQLILKDPKQLNSSFKRTGMESQPFLNMKFETDYFVKVVPFPSIKNESNYHPFFFRTRACDLLLQPDNLACKPFWKPRNLNISQHGSDMQVSFDHAPHNFGFRFFYLHYKLKHEGPFKRKTCKQEQTTETTSCLLQNVSPGDYIIELVDDTNTTRKVMHYALKPVHSPWAGPIRAVAITVPLVVISAFATLFTVMCRKKQQENIYSHLDEESSESSTYTAALPRERLRPRPKVFLCYSSKDGQNHMNVVQCFAYFLQDFCGCEVALDLWEDFSLCREGQREWVIQKIHESQFIIVVCSKGMKYFVDKKNYKHKGGGRGSGKGELFLVAVSAIAEKLRQAKQSSSAALSKFIAVYFDYSCEGDVPGILDLSTKYRLMDNLPQLCSHLHSRDHGLQEPGQHTRQGSRRNYFRSKSGRSLYVAICNMHQFIDEEPDWFEKQFVPFHPPPLRYREPVLEKFDSGLVLNDVMCKPGPESDFCLKVEAAVLGATGPADSQHESQHGGLDQDGEARPALDGSAALQPLLHTVKAGSPSDMPRDSGIYDSSVPSSELSLPLMEGLSTDQTETSSLTESVSSSSGLGEEEPPALPSKLLSSGSCKADLGCRSYTDELHAVAPL</sequence>
<accession>Q8NFM7</accession>
<accession>Q2NKP7</accession>
<accession>Q58EZ7</accession>
<accession>Q6RVF4</accession>
<accession>Q6UWI5</accession>
<accession>Q8N113</accession>
<accession>Q8NFS0</accession>
<accession>Q9UFA0</accession>
<organism>
    <name type="scientific">Homo sapiens</name>
    <name type="common">Human</name>
    <dbReference type="NCBI Taxonomy" id="9606"/>
    <lineage>
        <taxon>Eukaryota</taxon>
        <taxon>Metazoa</taxon>
        <taxon>Chordata</taxon>
        <taxon>Craniata</taxon>
        <taxon>Vertebrata</taxon>
        <taxon>Euteleostomi</taxon>
        <taxon>Mammalia</taxon>
        <taxon>Eutheria</taxon>
        <taxon>Euarchontoglires</taxon>
        <taxon>Primates</taxon>
        <taxon>Haplorrhini</taxon>
        <taxon>Catarrhini</taxon>
        <taxon>Hominidae</taxon>
        <taxon>Homo</taxon>
    </lineage>
</organism>
<protein>
    <recommendedName>
        <fullName>Interleukin-17 receptor D</fullName>
        <shortName>IL-17 receptor D</shortName>
        <shortName>IL-17RD</shortName>
    </recommendedName>
    <alternativeName>
        <fullName>IL17Rhom</fullName>
    </alternativeName>
    <alternativeName>
        <fullName>Interleukin-17 receptor-like protein</fullName>
    </alternativeName>
    <alternativeName>
        <fullName>Sef homolog</fullName>
        <shortName>hSef</shortName>
    </alternativeName>
</protein>
<comment type="function">
    <text evidence="2 6 7 10">Feedback inhibitor of fibroblast growth factor mediated Ras-MAPK signaling and ERK activation (PubMed:12807873, PubMed:12958313). Regulates the nuclear ERK signaling pathway by spatially blocking nuclear translocation of activated ERK without inhibiting cytoplasmic phosphorylation of ERK (PubMed:15239952). Mediates JNK activation and may be involved in apoptosis (By similarity). May inhibit FGF-induced FGFR1 tyrosine phosphorylation (By similarity). Might have a role in the early stages of fate specification of GnRH-secreting neurons (By similarity). Inhibits TGFB-induced epithelial-to-mesenchymal transition in lens epithelial cells (By similarity).</text>
</comment>
<comment type="subunit">
    <text evidence="1 6 7 10">Interacts with MAP3K7 (By similarity). Self-associates. Interacts with FGFR1, FGFR2 and phosphorylated MAP2K1 or MAP2K2. Associates with a MAP2K1/2-MAPK1/3 complex.</text>
</comment>
<comment type="interaction">
    <interactant intactId="EBI-20809393">
        <id>Q8NFM7</id>
    </interactant>
    <interactant intactId="EBI-2510653">
        <id>Q9NYV6</id>
        <label>RRN3</label>
    </interactant>
    <organismsDiffer>false</organismsDiffer>
    <experiments>2</experiments>
</comment>
<comment type="subcellular location">
    <subcellularLocation>
        <location evidence="9">Golgi apparatus membrane</location>
        <topology evidence="9">Single-pass type I membrane protein</topology>
    </subcellularLocation>
    <subcellularLocation>
        <location evidence="9">Cell membrane</location>
        <topology evidence="9">Single-pass type I membrane protein</topology>
    </subcellularLocation>
    <text>Predominantly associated with the Golgi apparatus and is partially translocated to the plasma membrane upon stimulation.</text>
</comment>
<comment type="subcellular location">
    <molecule>Isoform 4</molecule>
    <subcellularLocation>
        <location>Cytoplasm</location>
    </subcellularLocation>
</comment>
<comment type="alternative products">
    <event type="alternative splicing"/>
    <isoform>
        <id>Q8NFM7-1</id>
        <name>1</name>
        <name>hSef-a</name>
        <name>IL17RLM-L</name>
        <name>Long</name>
        <sequence type="displayed"/>
    </isoform>
    <isoform>
        <id>Q8NFM7-2</id>
        <name>2</name>
        <name>IL17RLM-S</name>
        <name>Short</name>
        <sequence type="described" ref="VSP_015582"/>
    </isoform>
    <isoform>
        <id>Q8NFM7-3</id>
        <name>3</name>
        <sequence type="described" ref="VSP_015583"/>
    </isoform>
    <isoform>
        <id>Q8NFM7-4</id>
        <name>4</name>
        <name>hSef-b</name>
        <sequence type="described" ref="VSP_015584"/>
    </isoform>
</comment>
<comment type="tissue specificity">
    <text evidence="6">Expressed in umbilical vein endothelial cells and in several highly vascularized tissues such as kidney, colon, skeletal muscle, heart and small intestine. Highly expressed in ductal epithelial cells of salivary glands, seminal vesicles and the collecting tubules of the kidney. Isoform 1 is also highly expressed in both fetal and adult brain, pituitary, tonsils, spleen, adenoids, fetal kidney, liver, testes and ovary. Isoform 1 is also expressed at moderate levels in primary aortic endothelial cells and adrenal medulla, and at low levels in adrenal cortex. Isoform 4 is specifically and highly expressed in pituitary, fetal brain and umbilical vein endothelial cells.</text>
</comment>
<comment type="disease" evidence="13">
    <disease id="DI-03769">
        <name>Hypogonadotropic hypogonadism 18 with or without anosmia</name>
        <acronym>HH18</acronym>
        <description>A disorder characterized by absent or incomplete sexual maturation by the age of 18 years, in conjunction with low levels of circulating gonadotropins and testosterone and no other abnormalities of the hypothalamic-pituitary axis. In some cases, it is associated with non-reproductive phenotypes, such as anosmia, cleft palate, and sensorineural hearing loss. Anosmia or hyposmia is related to the absence or hypoplasia of the olfactory bulbs and tracts. Hypogonadism is due to deficiency in gonadotropin-releasing hormone and probably results from a failure of embryonic migration of gonadotropin-releasing hormone-synthesizing neurons. In the presence of anosmia, idiopathic hypogonadotropic hypogonadism is referred to as Kallmann syndrome, whereas in the presence of a normal sense of smell, it has been termed normosmic idiopathic hypogonadotropic hypogonadism (nIHH).</description>
        <dbReference type="MIM" id="615267"/>
    </disease>
    <text evidence="13">The disease is caused by variants affecting distinct genetic loci, including the gene represented in this entry. Some patients carrying mutations in IL17RD also have a heterozygous mutation in another HH-associated gene including FGFR1 and KISS1R (PubMed:23643382).</text>
</comment>
<feature type="signal peptide" evidence="3">
    <location>
        <begin position="1"/>
        <end position="16"/>
    </location>
</feature>
<feature type="chain" id="PRO_0000041871" description="Interleukin-17 receptor D">
    <location>
        <begin position="17"/>
        <end position="739"/>
    </location>
</feature>
<feature type="topological domain" description="Extracellular" evidence="3">
    <location>
        <begin position="17"/>
        <end position="299"/>
    </location>
</feature>
<feature type="transmembrane region" description="Helical" evidence="3">
    <location>
        <begin position="300"/>
        <end position="320"/>
    </location>
</feature>
<feature type="topological domain" description="Cytoplasmic" evidence="3">
    <location>
        <begin position="321"/>
        <end position="739"/>
    </location>
</feature>
<feature type="domain" description="SEFIR" evidence="4">
    <location>
        <begin position="355"/>
        <end position="509"/>
    </location>
</feature>
<feature type="region of interest" description="Disordered" evidence="5">
    <location>
        <begin position="614"/>
        <end position="635"/>
    </location>
</feature>
<feature type="region of interest" description="Disordered" evidence="5">
    <location>
        <begin position="650"/>
        <end position="719"/>
    </location>
</feature>
<feature type="compositionally biased region" description="Low complexity" evidence="5">
    <location>
        <begin position="667"/>
        <end position="702"/>
    </location>
</feature>
<feature type="glycosylation site" description="N-linked (GlcNAc...) asparagine" evidence="3">
    <location>
        <position position="19"/>
    </location>
</feature>
<feature type="glycosylation site" description="N-linked (GlcNAc...) asparagine" evidence="3">
    <location>
        <position position="55"/>
    </location>
</feature>
<feature type="glycosylation site" description="N-linked (GlcNAc...) asparagine" evidence="3">
    <location>
        <position position="62"/>
    </location>
</feature>
<feature type="glycosylation site" description="N-linked (GlcNAc...) asparagine" evidence="3">
    <location>
        <position position="80"/>
    </location>
</feature>
<feature type="glycosylation site" description="N-linked (GlcNAc...) asparagine" evidence="3">
    <location>
        <position position="137"/>
    </location>
</feature>
<feature type="glycosylation site" description="N-linked (GlcNAc...) asparagine" evidence="3">
    <location>
        <position position="171"/>
    </location>
</feature>
<feature type="glycosylation site" description="N-linked (GlcNAc...) asparagine" evidence="3">
    <location>
        <position position="206"/>
    </location>
</feature>
<feature type="glycosylation site" description="N-linked (GlcNAc...) asparagine" evidence="3">
    <location>
        <position position="277"/>
    </location>
</feature>
<feature type="splice variant" id="VSP_015582" description="In isoform 2." evidence="15 19">
    <location>
        <begin position="1"/>
        <end position="144"/>
    </location>
</feature>
<feature type="splice variant" id="VSP_015583" description="In isoform 3." evidence="16">
    <original>MAPWLQLCSVFFTVNACLNGSQLAVAAGGSGRARGADTCGWR</original>
    <variation>MPRASASGVPALFVSGEQ</variation>
    <location>
        <begin position="1"/>
        <end position="42"/>
    </location>
</feature>
<feature type="splice variant" id="VSP_015584" description="In isoform 4." evidence="17 18">
    <original>MAPWLQLCSVFFTVNACLNGSQLAVAAGGSGRARGADTCGWR</original>
    <variation>MDYRQSWPWQ</variation>
    <location>
        <begin position="1"/>
        <end position="42"/>
    </location>
</feature>
<feature type="sequence variant" id="VAR_069936" description="In HH18; results in decreased expression at the cell surface and reduced activity; dbSNP:rs184758350." evidence="13">
    <original>K</original>
    <variation>T</variation>
    <location>
        <position position="131"/>
    </location>
</feature>
<feature type="sequence variant" id="VAR_069937" description="In HH18; results in decreased expression at the cell surface." evidence="13">
    <original>K</original>
    <variation>R</variation>
    <location>
        <position position="162"/>
    </location>
</feature>
<feature type="sequence variant" id="VAR_023478" description="In dbSNP:rs6780995." evidence="7 8 9 11 12 14">
    <original>T</original>
    <variation>M</variation>
    <location>
        <position position="255"/>
    </location>
</feature>
<feature type="sequence variant" id="VAR_023479" description="In dbSNP:rs17057718.">
    <original>V</original>
    <variation>M</variation>
    <location>
        <position position="301"/>
    </location>
</feature>
<feature type="sequence variant" id="VAR_069938" description="In HH18; reduced activity." evidence="13">
    <original>P</original>
    <variation>S</variation>
    <location>
        <position position="306"/>
    </location>
</feature>
<feature type="sequence variant" id="VAR_069939" description="In HH18; some patients have a second mutation in the HH-associated gene FGFR1; reduced activity; dbSNP:rs369641068." evidence="13">
    <original>Y</original>
    <variation>C</variation>
    <location>
        <position position="379"/>
    </location>
</feature>
<feature type="sequence variant" id="VAR_069940" description="In HH18; reduced activity; dbSNP:rs145221454." evidence="13">
    <original>S</original>
    <variation>L</variation>
    <location>
        <position position="468"/>
    </location>
</feature>
<feature type="sequence variant" id="VAR_069941" description="In HH18; reduced activity; dbSNP:rs587776980." evidence="13">
    <original>P</original>
    <variation>Q</variation>
    <location>
        <position position="577"/>
    </location>
</feature>
<feature type="sequence variant" id="VAR_069942" description="In HH18; the patient carries a second mutation in the HH-associated gene KISS1R; results in decreased expression at the cell surface; dbSNP:rs587776979." evidence="13">
    <original>A</original>
    <variation>V</variation>
    <location>
        <position position="735"/>
    </location>
</feature>
<feature type="sequence conflict" description="In Ref. 4; CAB61408." evidence="20" ref="4">
    <original>H</original>
    <variation>HGSDMQVSFDHAPH</variation>
    <location>
        <position position="223"/>
    </location>
</feature>
<feature type="sequence conflict" description="In Ref. 1; AAM74077." evidence="20" ref="1">
    <original>K</original>
    <variation>E</variation>
    <location>
        <position position="248"/>
    </location>
</feature>
<dbReference type="EMBL" id="AF494208">
    <property type="protein sequence ID" value="AAM74077.1"/>
    <property type="molecule type" value="mRNA"/>
</dbReference>
<dbReference type="EMBL" id="AF494211">
    <property type="protein sequence ID" value="AAM74080.1"/>
    <property type="molecule type" value="mRNA"/>
</dbReference>
<dbReference type="EMBL" id="AY489047">
    <property type="protein sequence ID" value="AAS15051.2"/>
    <property type="molecule type" value="mRNA"/>
</dbReference>
<dbReference type="EMBL" id="AF458067">
    <property type="protein sequence ID" value="AAM77571.1"/>
    <property type="molecule type" value="mRNA"/>
</dbReference>
<dbReference type="EMBL" id="AY358774">
    <property type="protein sequence ID" value="AAQ89134.1"/>
    <property type="molecule type" value="mRNA"/>
</dbReference>
<dbReference type="EMBL" id="AL133097">
    <property type="protein sequence ID" value="CAB61408.1"/>
    <property type="molecule type" value="mRNA"/>
</dbReference>
<dbReference type="EMBL" id="AL833913">
    <property type="protein sequence ID" value="CAD38769.1"/>
    <property type="molecule type" value="mRNA"/>
</dbReference>
<dbReference type="EMBL" id="BC111702">
    <property type="protein sequence ID" value="AAI11703.2"/>
    <property type="molecule type" value="mRNA"/>
</dbReference>
<dbReference type="CCDS" id="CCDS2880.2">
    <molecule id="Q8NFM7-1"/>
</dbReference>
<dbReference type="CCDS" id="CCDS82790.1">
    <molecule id="Q8NFM7-2"/>
</dbReference>
<dbReference type="PIR" id="T42695">
    <property type="entry name" value="T42695"/>
</dbReference>
<dbReference type="RefSeq" id="NP_001305793.1">
    <molecule id="Q8NFM7-2"/>
    <property type="nucleotide sequence ID" value="NM_001318864.2"/>
</dbReference>
<dbReference type="RefSeq" id="NP_060033.3">
    <molecule id="Q8NFM7-1"/>
    <property type="nucleotide sequence ID" value="NM_017563.5"/>
</dbReference>
<dbReference type="RefSeq" id="XP_006713272.1">
    <property type="nucleotide sequence ID" value="XM_006713209.3"/>
</dbReference>
<dbReference type="RefSeq" id="XP_011532151.2">
    <molecule id="Q8NFM7-2"/>
    <property type="nucleotide sequence ID" value="XM_011533849.2"/>
</dbReference>
<dbReference type="RefSeq" id="XP_047304325.1">
    <molecule id="Q8NFM7-2"/>
    <property type="nucleotide sequence ID" value="XM_047448369.1"/>
</dbReference>
<dbReference type="SMR" id="Q8NFM7"/>
<dbReference type="BioGRID" id="120132">
    <property type="interactions" value="27"/>
</dbReference>
<dbReference type="CORUM" id="Q8NFM7"/>
<dbReference type="FunCoup" id="Q8NFM7">
    <property type="interactions" value="610"/>
</dbReference>
<dbReference type="IntAct" id="Q8NFM7">
    <property type="interactions" value="6"/>
</dbReference>
<dbReference type="MINT" id="Q8NFM7"/>
<dbReference type="STRING" id="9606.ENSP00000296318"/>
<dbReference type="GlyCosmos" id="Q8NFM7">
    <property type="glycosylation" value="8 sites, No reported glycans"/>
</dbReference>
<dbReference type="GlyGen" id="Q8NFM7">
    <property type="glycosylation" value="8 sites, 3 N-linked glycans (4 sites)"/>
</dbReference>
<dbReference type="iPTMnet" id="Q8NFM7"/>
<dbReference type="PhosphoSitePlus" id="Q8NFM7"/>
<dbReference type="BioMuta" id="IL17RD"/>
<dbReference type="DMDM" id="126302555"/>
<dbReference type="jPOST" id="Q8NFM7"/>
<dbReference type="MassIVE" id="Q8NFM7"/>
<dbReference type="PaxDb" id="9606-ENSP00000296318"/>
<dbReference type="PeptideAtlas" id="Q8NFM7"/>
<dbReference type="ProteomicsDB" id="73324">
    <molecule id="Q8NFM7-1"/>
</dbReference>
<dbReference type="ProteomicsDB" id="73325">
    <molecule id="Q8NFM7-2"/>
</dbReference>
<dbReference type="ProteomicsDB" id="73326">
    <molecule id="Q8NFM7-3"/>
</dbReference>
<dbReference type="ProteomicsDB" id="73327">
    <molecule id="Q8NFM7-4"/>
</dbReference>
<dbReference type="Antibodypedia" id="31518">
    <property type="antibodies" value="312 antibodies from 31 providers"/>
</dbReference>
<dbReference type="DNASU" id="54756"/>
<dbReference type="Ensembl" id="ENST00000296318.12">
    <molecule id="Q8NFM7-1"/>
    <property type="protein sequence ID" value="ENSP00000296318.7"/>
    <property type="gene ID" value="ENSG00000144730.19"/>
</dbReference>
<dbReference type="Ensembl" id="ENST00000320057.9">
    <molecule id="Q8NFM7-2"/>
    <property type="protein sequence ID" value="ENSP00000322250.5"/>
    <property type="gene ID" value="ENSG00000144730.19"/>
</dbReference>
<dbReference type="Ensembl" id="ENST00000463523.5">
    <molecule id="Q8NFM7-2"/>
    <property type="protein sequence ID" value="ENSP00000417516.1"/>
    <property type="gene ID" value="ENSG00000144730.19"/>
</dbReference>
<dbReference type="GeneID" id="54756"/>
<dbReference type="KEGG" id="hsa:54756"/>
<dbReference type="MANE-Select" id="ENST00000296318.12">
    <property type="protein sequence ID" value="ENSP00000296318.7"/>
    <property type="RefSeq nucleotide sequence ID" value="NM_017563.5"/>
    <property type="RefSeq protein sequence ID" value="NP_060033.3"/>
</dbReference>
<dbReference type="UCSC" id="uc003dil.3">
    <molecule id="Q8NFM7-1"/>
    <property type="organism name" value="human"/>
</dbReference>
<dbReference type="AGR" id="HGNC:17616"/>
<dbReference type="CTD" id="54756"/>
<dbReference type="DisGeNET" id="54756"/>
<dbReference type="GeneCards" id="IL17RD"/>
<dbReference type="GeneReviews" id="IL17RD"/>
<dbReference type="HGNC" id="HGNC:17616">
    <property type="gene designation" value="IL17RD"/>
</dbReference>
<dbReference type="HPA" id="ENSG00000144730">
    <property type="expression patterns" value="Low tissue specificity"/>
</dbReference>
<dbReference type="MalaCards" id="IL17RD"/>
<dbReference type="MIM" id="606807">
    <property type="type" value="gene"/>
</dbReference>
<dbReference type="MIM" id="615267">
    <property type="type" value="phenotype"/>
</dbReference>
<dbReference type="neXtProt" id="NX_Q8NFM7"/>
<dbReference type="OpenTargets" id="ENSG00000144730"/>
<dbReference type="Orphanet" id="478">
    <property type="disease" value="Kallmann syndrome"/>
</dbReference>
<dbReference type="PharmGKB" id="PA134993407"/>
<dbReference type="VEuPathDB" id="HostDB:ENSG00000144730"/>
<dbReference type="eggNOG" id="ENOG502QV61">
    <property type="taxonomic scope" value="Eukaryota"/>
</dbReference>
<dbReference type="GeneTree" id="ENSGT00940000156669"/>
<dbReference type="HOGENOM" id="CLU_024846_0_0_1"/>
<dbReference type="InParanoid" id="Q8NFM7"/>
<dbReference type="OMA" id="KNCKEDQ"/>
<dbReference type="OrthoDB" id="9325096at2759"/>
<dbReference type="PAN-GO" id="Q8NFM7">
    <property type="GO annotations" value="1 GO annotation based on evolutionary models"/>
</dbReference>
<dbReference type="PhylomeDB" id="Q8NFM7"/>
<dbReference type="TreeFam" id="TF329644"/>
<dbReference type="PathwayCommons" id="Q8NFM7"/>
<dbReference type="Reactome" id="R-HSA-5674135">
    <property type="pathway name" value="MAP2K and MAPK activation"/>
</dbReference>
<dbReference type="SignaLink" id="Q8NFM7"/>
<dbReference type="BioGRID-ORCS" id="54756">
    <property type="hits" value="14 hits in 1148 CRISPR screens"/>
</dbReference>
<dbReference type="ChiTaRS" id="IL17RD">
    <property type="organism name" value="human"/>
</dbReference>
<dbReference type="GenomeRNAi" id="54756"/>
<dbReference type="Pharos" id="Q8NFM7">
    <property type="development level" value="Tbio"/>
</dbReference>
<dbReference type="PRO" id="PR:Q8NFM7"/>
<dbReference type="Proteomes" id="UP000005640">
    <property type="component" value="Chromosome 3"/>
</dbReference>
<dbReference type="RNAct" id="Q8NFM7">
    <property type="molecule type" value="protein"/>
</dbReference>
<dbReference type="Bgee" id="ENSG00000144730">
    <property type="expression patterns" value="Expressed in secondary oocyte and 173 other cell types or tissues"/>
</dbReference>
<dbReference type="ExpressionAtlas" id="Q8NFM7">
    <property type="expression patterns" value="baseline and differential"/>
</dbReference>
<dbReference type="GO" id="GO:0005794">
    <property type="term" value="C:Golgi apparatus"/>
    <property type="evidence" value="ECO:0000314"/>
    <property type="project" value="HPA"/>
</dbReference>
<dbReference type="GO" id="GO:0000139">
    <property type="term" value="C:Golgi membrane"/>
    <property type="evidence" value="ECO:0000304"/>
    <property type="project" value="Reactome"/>
</dbReference>
<dbReference type="GO" id="GO:0005654">
    <property type="term" value="C:nucleoplasm"/>
    <property type="evidence" value="ECO:0000314"/>
    <property type="project" value="HPA"/>
</dbReference>
<dbReference type="GO" id="GO:0005886">
    <property type="term" value="C:plasma membrane"/>
    <property type="evidence" value="ECO:0007669"/>
    <property type="project" value="UniProtKB-SubCell"/>
</dbReference>
<dbReference type="GO" id="GO:0030368">
    <property type="term" value="F:interleukin-17 receptor activity"/>
    <property type="evidence" value="ECO:0000318"/>
    <property type="project" value="GO_Central"/>
</dbReference>
<dbReference type="GO" id="GO:0010719">
    <property type="term" value="P:negative regulation of epithelial to mesenchymal transition"/>
    <property type="evidence" value="ECO:0000250"/>
    <property type="project" value="UniProtKB"/>
</dbReference>
<dbReference type="GO" id="GO:0030512">
    <property type="term" value="P:negative regulation of transforming growth factor beta receptor signaling pathway"/>
    <property type="evidence" value="ECO:0000250"/>
    <property type="project" value="UniProtKB"/>
</dbReference>
<dbReference type="FunFam" id="3.40.50.11530:FF:000003">
    <property type="entry name" value="Interleukin-17 receptor D"/>
    <property type="match status" value="1"/>
</dbReference>
<dbReference type="Gene3D" id="3.40.50.11530">
    <property type="match status" value="1"/>
</dbReference>
<dbReference type="InterPro" id="IPR039465">
    <property type="entry name" value="IL-17_rcpt-like"/>
</dbReference>
<dbReference type="InterPro" id="IPR031951">
    <property type="entry name" value="IL17R_D_N"/>
</dbReference>
<dbReference type="InterPro" id="IPR013568">
    <property type="entry name" value="SEFIR_dom"/>
</dbReference>
<dbReference type="InterPro" id="IPR035897">
    <property type="entry name" value="Toll_tir_struct_dom_sf"/>
</dbReference>
<dbReference type="PANTHER" id="PTHR15583">
    <property type="entry name" value="INTERLEUKIN-17 RECEPTOR"/>
    <property type="match status" value="1"/>
</dbReference>
<dbReference type="PANTHER" id="PTHR15583:SF14">
    <property type="entry name" value="INTERLEUKIN-17 RECEPTOR D"/>
    <property type="match status" value="1"/>
</dbReference>
<dbReference type="Pfam" id="PF16742">
    <property type="entry name" value="IL17R_D_N"/>
    <property type="match status" value="1"/>
</dbReference>
<dbReference type="Pfam" id="PF08357">
    <property type="entry name" value="SEFIR"/>
    <property type="match status" value="1"/>
</dbReference>
<dbReference type="SUPFAM" id="SSF52200">
    <property type="entry name" value="Toll/Interleukin receptor TIR domain"/>
    <property type="match status" value="1"/>
</dbReference>
<dbReference type="PROSITE" id="PS51534">
    <property type="entry name" value="SEFIR"/>
    <property type="match status" value="1"/>
</dbReference>
<evidence type="ECO:0000250" key="1"/>
<evidence type="ECO:0000250" key="2">
    <source>
        <dbReference type="UniProtKB" id="Q8JZL1"/>
    </source>
</evidence>
<evidence type="ECO:0000255" key="3"/>
<evidence type="ECO:0000255" key="4">
    <source>
        <dbReference type="PROSITE-ProRule" id="PRU00867"/>
    </source>
</evidence>
<evidence type="ECO:0000256" key="5">
    <source>
        <dbReference type="SAM" id="MobiDB-lite"/>
    </source>
</evidence>
<evidence type="ECO:0000269" key="6">
    <source>
    </source>
</evidence>
<evidence type="ECO:0000269" key="7">
    <source>
    </source>
</evidence>
<evidence type="ECO:0000269" key="8">
    <source>
    </source>
</evidence>
<evidence type="ECO:0000269" key="9">
    <source>
    </source>
</evidence>
<evidence type="ECO:0000269" key="10">
    <source>
    </source>
</evidence>
<evidence type="ECO:0000269" key="11">
    <source>
    </source>
</evidence>
<evidence type="ECO:0000269" key="12">
    <source>
    </source>
</evidence>
<evidence type="ECO:0000269" key="13">
    <source>
    </source>
</evidence>
<evidence type="ECO:0000269" key="14">
    <source ref="3"/>
</evidence>
<evidence type="ECO:0000303" key="15">
    <source>
    </source>
</evidence>
<evidence type="ECO:0000303" key="16">
    <source>
    </source>
</evidence>
<evidence type="ECO:0000303" key="17">
    <source>
    </source>
</evidence>
<evidence type="ECO:0000303" key="18">
    <source>
    </source>
</evidence>
<evidence type="ECO:0000303" key="19">
    <source>
    </source>
</evidence>
<evidence type="ECO:0000305" key="20"/>
<keyword id="KW-0025">Alternative splicing</keyword>
<keyword id="KW-1003">Cell membrane</keyword>
<keyword id="KW-0963">Cytoplasm</keyword>
<keyword id="KW-0225">Disease variant</keyword>
<keyword id="KW-0325">Glycoprotein</keyword>
<keyword id="KW-0333">Golgi apparatus</keyword>
<keyword id="KW-1016">Hypogonadotropic hypogonadism</keyword>
<keyword id="KW-0956">Kallmann syndrome</keyword>
<keyword id="KW-0472">Membrane</keyword>
<keyword id="KW-1267">Proteomics identification</keyword>
<keyword id="KW-0675">Receptor</keyword>
<keyword id="KW-1185">Reference proteome</keyword>
<keyword id="KW-0732">Signal</keyword>
<keyword id="KW-0812">Transmembrane</keyword>
<keyword id="KW-1133">Transmembrane helix</keyword>
<proteinExistence type="evidence at protein level"/>
<gene>
    <name type="primary">IL17RD</name>
    <name type="synonym">IL17RLM</name>
    <name type="synonym">SEF</name>
    <name type="ORF">UNQ6115/PRO20026</name>
</gene>